<keyword id="KW-0256">Endoplasmic reticulum</keyword>
<keyword id="KW-0325">Glycoprotein</keyword>
<keyword id="KW-0472">Membrane</keyword>
<keyword id="KW-1185">Reference proteome</keyword>
<keyword id="KW-0732">Signal</keyword>
<keyword id="KW-0812">Transmembrane</keyword>
<keyword id="KW-1133">Transmembrane helix</keyword>
<protein>
    <recommendedName>
        <fullName>ER membrane protein complex subunit 1</fullName>
    </recommendedName>
</protein>
<organism>
    <name type="scientific">Schizosaccharomyces pombe (strain 972 / ATCC 24843)</name>
    <name type="common">Fission yeast</name>
    <dbReference type="NCBI Taxonomy" id="284812"/>
    <lineage>
        <taxon>Eukaryota</taxon>
        <taxon>Fungi</taxon>
        <taxon>Dikarya</taxon>
        <taxon>Ascomycota</taxon>
        <taxon>Taphrinomycotina</taxon>
        <taxon>Schizosaccharomycetes</taxon>
        <taxon>Schizosaccharomycetales</taxon>
        <taxon>Schizosaccharomycetaceae</taxon>
        <taxon>Schizosaccharomyces</taxon>
    </lineage>
</organism>
<proteinExistence type="inferred from homology"/>
<feature type="signal peptide" evidence="3">
    <location>
        <begin position="1"/>
        <end position="22"/>
    </location>
</feature>
<feature type="chain" id="PRO_0000350761" description="ER membrane protein complex subunit 1">
    <location>
        <begin position="23"/>
        <end position="885"/>
    </location>
</feature>
<feature type="topological domain" description="Lumenal" evidence="3">
    <location>
        <begin position="23"/>
        <end position="855"/>
    </location>
</feature>
<feature type="transmembrane region" description="Helical" evidence="3">
    <location>
        <begin position="856"/>
        <end position="874"/>
    </location>
</feature>
<feature type="topological domain" description="Cytoplasmic" evidence="3">
    <location>
        <begin position="875"/>
        <end position="885"/>
    </location>
</feature>
<feature type="glycosylation site" description="N-linked (GlcNAc...) asparagine" evidence="3">
    <location>
        <position position="66"/>
    </location>
</feature>
<feature type="glycosylation site" description="N-linked (GlcNAc...) asparagine" evidence="3">
    <location>
        <position position="302"/>
    </location>
</feature>
<feature type="glycosylation site" description="N-linked (GlcNAc...) asparagine" evidence="3">
    <location>
        <position position="397"/>
    </location>
</feature>
<feature type="glycosylation site" description="N-linked (GlcNAc...) asparagine" evidence="3">
    <location>
        <position position="502"/>
    </location>
</feature>
<feature type="glycosylation site" description="N-linked (GlcNAc...) asparagine" evidence="3">
    <location>
        <position position="526"/>
    </location>
</feature>
<feature type="glycosylation site" description="N-linked (GlcNAc...) asparagine" evidence="3">
    <location>
        <position position="687"/>
    </location>
</feature>
<evidence type="ECO:0000250" key="1">
    <source>
        <dbReference type="UniProtKB" id="P25574"/>
    </source>
</evidence>
<evidence type="ECO:0000250" key="2">
    <source>
        <dbReference type="UniProtKB" id="Q8N766"/>
    </source>
</evidence>
<evidence type="ECO:0000255" key="3"/>
<evidence type="ECO:0000305" key="4"/>
<comment type="function">
    <text evidence="1 2">Part of the endoplasmic reticulum membrane protein complex (EMC) that enables the energy-independent insertion into endoplasmic reticulum membranes of newly synthesized membrane proteins. Preferentially accommodates proteins with transmembrane domains that are weakly hydrophobic or contain destabilizing features such as charged and aromatic residues. Involved in the cotranslational insertion of multi-pass membrane proteins in which stop-transfer membrane-anchor sequences become ER membrane spanning helices (By similarity). It is also required for the post-translational insertion of tail-anchored/TA proteins in endoplasmic reticulum membranes. By mediating the proper cotranslational insertion of N-terminal transmembrane domains in an N-exo topology, with translocated N-terminus in the lumen of the ER, controls the topology of multi-pass membrane proteins (By similarity).</text>
</comment>
<comment type="subunit">
    <text evidence="1">Component of the ER membrane protein complex (EMC).</text>
</comment>
<comment type="subcellular location">
    <subcellularLocation>
        <location evidence="1">Endoplasmic reticulum membrane</location>
        <topology evidence="1">Single-pass type I membrane protein</topology>
    </subcellularLocation>
</comment>
<comment type="similarity">
    <text evidence="4">Belongs to the EMC1 family.</text>
</comment>
<dbReference type="EMBL" id="CU329670">
    <property type="protein sequence ID" value="CAB11603.1"/>
    <property type="molecule type" value="Genomic_DNA"/>
</dbReference>
<dbReference type="EMBL" id="AB027822">
    <property type="protein sequence ID" value="BAA87126.1"/>
    <property type="molecule type" value="Genomic_DNA"/>
</dbReference>
<dbReference type="PIR" id="T38387">
    <property type="entry name" value="T38387"/>
</dbReference>
<dbReference type="RefSeq" id="NP_593811.1">
    <property type="nucleotide sequence ID" value="NM_001019240.2"/>
</dbReference>
<dbReference type="SMR" id="O13981"/>
<dbReference type="BioGRID" id="279169">
    <property type="interactions" value="89"/>
</dbReference>
<dbReference type="FunCoup" id="O13981">
    <property type="interactions" value="351"/>
</dbReference>
<dbReference type="STRING" id="284812.O13981"/>
<dbReference type="GlyCosmos" id="O13981">
    <property type="glycosylation" value="6 sites, No reported glycans"/>
</dbReference>
<dbReference type="iPTMnet" id="O13981"/>
<dbReference type="PaxDb" id="4896-SPAC25H1.07.1"/>
<dbReference type="DNASU" id="2542716"/>
<dbReference type="EnsemblFungi" id="SPAC25H1.07.1">
    <property type="protein sequence ID" value="SPAC25H1.07.1:pep"/>
    <property type="gene ID" value="SPAC25H1.07"/>
</dbReference>
<dbReference type="GeneID" id="2542716"/>
<dbReference type="KEGG" id="spo:2542716"/>
<dbReference type="PomBase" id="SPAC25H1.07">
    <property type="gene designation" value="emc1"/>
</dbReference>
<dbReference type="VEuPathDB" id="FungiDB:SPAC25H1.07"/>
<dbReference type="eggNOG" id="KOG2103">
    <property type="taxonomic scope" value="Eukaryota"/>
</dbReference>
<dbReference type="HOGENOM" id="CLU_325206_0_0_1"/>
<dbReference type="InParanoid" id="O13981"/>
<dbReference type="OMA" id="SIFLPCY"/>
<dbReference type="PhylomeDB" id="O13981"/>
<dbReference type="PRO" id="PR:O13981"/>
<dbReference type="Proteomes" id="UP000002485">
    <property type="component" value="Chromosome I"/>
</dbReference>
<dbReference type="GO" id="GO:0072546">
    <property type="term" value="C:EMC complex"/>
    <property type="evidence" value="ECO:0000318"/>
    <property type="project" value="GO_Central"/>
</dbReference>
<dbReference type="GO" id="GO:0005783">
    <property type="term" value="C:endoplasmic reticulum"/>
    <property type="evidence" value="ECO:0007005"/>
    <property type="project" value="PomBase"/>
</dbReference>
<dbReference type="GO" id="GO:0045048">
    <property type="term" value="P:protein insertion into ER membrane"/>
    <property type="evidence" value="ECO:0000305"/>
    <property type="project" value="PomBase"/>
</dbReference>
<dbReference type="InterPro" id="IPR026895">
    <property type="entry name" value="EMC1"/>
</dbReference>
<dbReference type="InterPro" id="IPR011678">
    <property type="entry name" value="EMC1_C"/>
</dbReference>
<dbReference type="InterPro" id="IPR011047">
    <property type="entry name" value="Quinoprotein_ADH-like_sf"/>
</dbReference>
<dbReference type="PANTHER" id="PTHR21573">
    <property type="entry name" value="ER MEMBRANE PROTEIN COMPLEX SUBUNIT 1"/>
    <property type="match status" value="1"/>
</dbReference>
<dbReference type="PANTHER" id="PTHR21573:SF0">
    <property type="entry name" value="ER MEMBRANE PROTEIN COMPLEX SUBUNIT 1"/>
    <property type="match status" value="1"/>
</dbReference>
<dbReference type="Pfam" id="PF25293">
    <property type="entry name" value="Beta-prop_EMC1_N"/>
    <property type="match status" value="1"/>
</dbReference>
<dbReference type="Pfam" id="PF07774">
    <property type="entry name" value="EMC1_C"/>
    <property type="match status" value="1"/>
</dbReference>
<dbReference type="SUPFAM" id="SSF50998">
    <property type="entry name" value="Quinoprotein alcohol dehydrogenase-like"/>
    <property type="match status" value="1"/>
</dbReference>
<accession>O13981</accession>
<accession>Q9USE4</accession>
<gene>
    <name type="primary">emc1</name>
    <name type="ORF">SPAC25H1.07</name>
</gene>
<sequence length="885" mass="100925">MLRPLWPLFLTALFLNIYRAASVLIDEAGKNDFEISLLGKVNDLVYDTKNEYLYAVSQKGLLAKLNASNGDVIWRQSIAPETSQLNYNPVTNFIITVDKDYLYIWNSKNGILDRKIELADGKGKLFEVNKGFVYLNPHTRKFIELDLQASFSISIERDLQLDAISFLTYAEKNYVLFKRDGQFVLQALDHNYAVYGPETVLNVPENAQLLVTEKDVIIYSSNGVIYGIHVSMADISQLLIDEYKTFEWSSIPGKRHGYSITVDSQSTPVTYLFVIIDSEFVLIDEYIHEDTEALGYIHMEDNQTFSRVFAVANQIKFAPATVITIPNQLSRPVFRLFTFAEGEISAIVILDDGTFFSFSNTELVWKREEALAYAINPSILPTTLLTSYQKSIQDEENSSVSFLNRWYRHFNQLIDFLKHPHGFTSSSVLDDAFTTKIIIPTSTGSIFCLSSDPKQVHRILWRYDFNINPESVESWLLDISDEDPKFAFVHQWNDAFSFYILNASDGSVISQKSRDFKADEFYYVDNISKNLPNQIFAVKDYKVLPLTGDNSIFEKISQEANSIFVYTSETKVEGFSISADLTMDVQWSYNLAEGEIVIASIRRNPHEIVASFGRVLQNREVMYKYLNPNLFALFSKCKNDLVVYVMDSVTGSIVYQNKHQGIILFDKVYGVFSENWLVYSYQSDVPNLSTKIISVELFEGSHSNEKIDSNEIYSRHNDYRPYAFTKAYIFDREITTLGVTNTPQGITSRDVLLGLSSNQVAMIPQALLSPMRPVLRPNEKANDASFIPYEPIIPLNDDMVLSYNKRVYGVSQITSGITNFESTTLVLSTGLDVFFTRTAPSMPYDMLSSHFDKKQLMLTTFGILLAVLLTKPLVKKKQLNTKWYN</sequence>
<reference key="1">
    <citation type="journal article" date="2002" name="Nature">
        <title>The genome sequence of Schizosaccharomyces pombe.</title>
        <authorList>
            <person name="Wood V."/>
            <person name="Gwilliam R."/>
            <person name="Rajandream M.A."/>
            <person name="Lyne M.H."/>
            <person name="Lyne R."/>
            <person name="Stewart A."/>
            <person name="Sgouros J.G."/>
            <person name="Peat N."/>
            <person name="Hayles J."/>
            <person name="Baker S.G."/>
            <person name="Basham D."/>
            <person name="Bowman S."/>
            <person name="Brooks K."/>
            <person name="Brown D."/>
            <person name="Brown S."/>
            <person name="Chillingworth T."/>
            <person name="Churcher C.M."/>
            <person name="Collins M."/>
            <person name="Connor R."/>
            <person name="Cronin A."/>
            <person name="Davis P."/>
            <person name="Feltwell T."/>
            <person name="Fraser A."/>
            <person name="Gentles S."/>
            <person name="Goble A."/>
            <person name="Hamlin N."/>
            <person name="Harris D.E."/>
            <person name="Hidalgo J."/>
            <person name="Hodgson G."/>
            <person name="Holroyd S."/>
            <person name="Hornsby T."/>
            <person name="Howarth S."/>
            <person name="Huckle E.J."/>
            <person name="Hunt S."/>
            <person name="Jagels K."/>
            <person name="James K.D."/>
            <person name="Jones L."/>
            <person name="Jones M."/>
            <person name="Leather S."/>
            <person name="McDonald S."/>
            <person name="McLean J."/>
            <person name="Mooney P."/>
            <person name="Moule S."/>
            <person name="Mungall K.L."/>
            <person name="Murphy L.D."/>
            <person name="Niblett D."/>
            <person name="Odell C."/>
            <person name="Oliver K."/>
            <person name="O'Neil S."/>
            <person name="Pearson D."/>
            <person name="Quail M.A."/>
            <person name="Rabbinowitsch E."/>
            <person name="Rutherford K.M."/>
            <person name="Rutter S."/>
            <person name="Saunders D."/>
            <person name="Seeger K."/>
            <person name="Sharp S."/>
            <person name="Skelton J."/>
            <person name="Simmonds M.N."/>
            <person name="Squares R."/>
            <person name="Squares S."/>
            <person name="Stevens K."/>
            <person name="Taylor K."/>
            <person name="Taylor R.G."/>
            <person name="Tivey A."/>
            <person name="Walsh S.V."/>
            <person name="Warren T."/>
            <person name="Whitehead S."/>
            <person name="Woodward J.R."/>
            <person name="Volckaert G."/>
            <person name="Aert R."/>
            <person name="Robben J."/>
            <person name="Grymonprez B."/>
            <person name="Weltjens I."/>
            <person name="Vanstreels E."/>
            <person name="Rieger M."/>
            <person name="Schaefer M."/>
            <person name="Mueller-Auer S."/>
            <person name="Gabel C."/>
            <person name="Fuchs M."/>
            <person name="Duesterhoeft A."/>
            <person name="Fritzc C."/>
            <person name="Holzer E."/>
            <person name="Moestl D."/>
            <person name="Hilbert H."/>
            <person name="Borzym K."/>
            <person name="Langer I."/>
            <person name="Beck A."/>
            <person name="Lehrach H."/>
            <person name="Reinhardt R."/>
            <person name="Pohl T.M."/>
            <person name="Eger P."/>
            <person name="Zimmermann W."/>
            <person name="Wedler H."/>
            <person name="Wambutt R."/>
            <person name="Purnelle B."/>
            <person name="Goffeau A."/>
            <person name="Cadieu E."/>
            <person name="Dreano S."/>
            <person name="Gloux S."/>
            <person name="Lelaure V."/>
            <person name="Mottier S."/>
            <person name="Galibert F."/>
            <person name="Aves S.J."/>
            <person name="Xiang Z."/>
            <person name="Hunt C."/>
            <person name="Moore K."/>
            <person name="Hurst S.M."/>
            <person name="Lucas M."/>
            <person name="Rochet M."/>
            <person name="Gaillardin C."/>
            <person name="Tallada V.A."/>
            <person name="Garzon A."/>
            <person name="Thode G."/>
            <person name="Daga R.R."/>
            <person name="Cruzado L."/>
            <person name="Jimenez J."/>
            <person name="Sanchez M."/>
            <person name="del Rey F."/>
            <person name="Benito J."/>
            <person name="Dominguez A."/>
            <person name="Revuelta J.L."/>
            <person name="Moreno S."/>
            <person name="Armstrong J."/>
            <person name="Forsburg S.L."/>
            <person name="Cerutti L."/>
            <person name="Lowe T."/>
            <person name="McCombie W.R."/>
            <person name="Paulsen I."/>
            <person name="Potashkin J."/>
            <person name="Shpakovski G.V."/>
            <person name="Ussery D."/>
            <person name="Barrell B.G."/>
            <person name="Nurse P."/>
        </authorList>
    </citation>
    <scope>NUCLEOTIDE SEQUENCE [LARGE SCALE GENOMIC DNA]</scope>
    <source>
        <strain>972 / ATCC 24843</strain>
    </source>
</reference>
<reference key="2">
    <citation type="journal article" date="2000" name="Genes Cells">
        <title>Large-scale screening of intracellular protein localization in living fission yeast cells by the use of a GFP-fusion genomic DNA library.</title>
        <authorList>
            <person name="Ding D.-Q."/>
            <person name="Tomita Y."/>
            <person name="Yamamoto A."/>
            <person name="Chikashige Y."/>
            <person name="Haraguchi T."/>
            <person name="Hiraoka Y."/>
        </authorList>
    </citation>
    <scope>NUCLEOTIDE SEQUENCE [LARGE SCALE GENOMIC DNA] OF 265-445</scope>
    <scope>SUBCELLULAR LOCATION</scope>
    <source>
        <strain>ATCC 38364 / 968</strain>
    </source>
</reference>
<reference key="3">
    <citation type="journal article" date="2006" name="Nat. Biotechnol.">
        <title>ORFeome cloning and global analysis of protein localization in the fission yeast Schizosaccharomyces pombe.</title>
        <authorList>
            <person name="Matsuyama A."/>
            <person name="Arai R."/>
            <person name="Yashiroda Y."/>
            <person name="Shirai A."/>
            <person name="Kamata A."/>
            <person name="Sekido S."/>
            <person name="Kobayashi Y."/>
            <person name="Hashimoto A."/>
            <person name="Hamamoto M."/>
            <person name="Hiraoka Y."/>
            <person name="Horinouchi S."/>
            <person name="Yoshida M."/>
        </authorList>
    </citation>
    <scope>SUBCELLULAR LOCATION [LARGE SCALE ANALYSIS]</scope>
</reference>
<name>EMC1_SCHPO</name>